<comment type="function">
    <text>Calmodulin mediates the control of a large number of enzymes, ion channels and other proteins by Ca(2+). Among the enzymes to be stimulated by the calmodulin-Ca(2+) complex are a number of protein kinases and phosphatases.</text>
</comment>
<comment type="miscellaneous">
    <text>This protein has four functional calcium-binding sites.</text>
</comment>
<comment type="similarity">
    <text evidence="3">Belongs to the calmodulin family.</text>
</comment>
<proteinExistence type="evidence at transcript level"/>
<organism>
    <name type="scientific">Mougeotia scalaris</name>
    <name type="common">Green alga</name>
    <name type="synonym">Sphaerocarpus scalaris</name>
    <dbReference type="NCBI Taxonomy" id="13158"/>
    <lineage>
        <taxon>Eukaryota</taxon>
        <taxon>Viridiplantae</taxon>
        <taxon>Streptophyta</taxon>
        <taxon>Zygnematophyceae</taxon>
        <taxon>Zygnematophycidae</taxon>
        <taxon>Zygnematales</taxon>
        <taxon>Zygnemataceae</taxon>
        <taxon>Mougeotia</taxon>
    </lineage>
</organism>
<name>CALM_MOUSC</name>
<sequence length="149" mass="16909">MADQLTEEQIAEFKEAFSLFDKDGDGSITTKELGTVMRSLGQNPTEAELQDMINEVDADGNGTIDFPEFLNLMARKMKDTDSEEELKEAFKVFDKDQNGYISAADWRHVMTNLGEKLTDEEVDEMIREADVDGDGQVNYEEFVKMMMAK</sequence>
<protein>
    <recommendedName>
        <fullName>Calmodulin</fullName>
        <shortName>CaM</shortName>
    </recommendedName>
</protein>
<evidence type="ECO:0000250" key="1"/>
<evidence type="ECO:0000255" key="2">
    <source>
        <dbReference type="PROSITE-ProRule" id="PRU00448"/>
    </source>
</evidence>
<evidence type="ECO:0000305" key="3"/>
<dbReference type="EMBL" id="Y13784">
    <property type="protein sequence ID" value="CAA74111.1"/>
    <property type="molecule type" value="mRNA"/>
</dbReference>
<dbReference type="SMR" id="O82018"/>
<dbReference type="GO" id="GO:0016460">
    <property type="term" value="C:myosin II complex"/>
    <property type="evidence" value="ECO:0007669"/>
    <property type="project" value="TreeGrafter"/>
</dbReference>
<dbReference type="GO" id="GO:0005509">
    <property type="term" value="F:calcium ion binding"/>
    <property type="evidence" value="ECO:0007669"/>
    <property type="project" value="InterPro"/>
</dbReference>
<dbReference type="CDD" id="cd00051">
    <property type="entry name" value="EFh"/>
    <property type="match status" value="2"/>
</dbReference>
<dbReference type="FunFam" id="1.10.238.10:FF:000034">
    <property type="entry name" value="Calmodulin"/>
    <property type="match status" value="1"/>
</dbReference>
<dbReference type="FunFam" id="1.10.238.10:FF:000042">
    <property type="entry name" value="Calmodulin"/>
    <property type="match status" value="1"/>
</dbReference>
<dbReference type="Gene3D" id="1.10.238.10">
    <property type="entry name" value="EF-hand"/>
    <property type="match status" value="3"/>
</dbReference>
<dbReference type="InterPro" id="IPR050230">
    <property type="entry name" value="CALM/Myosin/TropC-like"/>
</dbReference>
<dbReference type="InterPro" id="IPR011992">
    <property type="entry name" value="EF-hand-dom_pair"/>
</dbReference>
<dbReference type="InterPro" id="IPR018247">
    <property type="entry name" value="EF_Hand_1_Ca_BS"/>
</dbReference>
<dbReference type="InterPro" id="IPR002048">
    <property type="entry name" value="EF_hand_dom"/>
</dbReference>
<dbReference type="PANTHER" id="PTHR23048:SF53">
    <property type="entry name" value="CALMODULIN"/>
    <property type="match status" value="1"/>
</dbReference>
<dbReference type="PANTHER" id="PTHR23048">
    <property type="entry name" value="MYOSIN LIGHT CHAIN 1, 3"/>
    <property type="match status" value="1"/>
</dbReference>
<dbReference type="Pfam" id="PF13499">
    <property type="entry name" value="EF-hand_7"/>
    <property type="match status" value="2"/>
</dbReference>
<dbReference type="SMART" id="SM00054">
    <property type="entry name" value="EFh"/>
    <property type="match status" value="4"/>
</dbReference>
<dbReference type="SUPFAM" id="SSF47473">
    <property type="entry name" value="EF-hand"/>
    <property type="match status" value="1"/>
</dbReference>
<dbReference type="PROSITE" id="PS00018">
    <property type="entry name" value="EF_HAND_1"/>
    <property type="match status" value="4"/>
</dbReference>
<dbReference type="PROSITE" id="PS50222">
    <property type="entry name" value="EF_HAND_2"/>
    <property type="match status" value="4"/>
</dbReference>
<reference key="1">
    <citation type="submission" date="1997-06" db="EMBL/GenBank/DDBJ databases">
        <title>Cloning, heterologous expression and characterisation of native 105-Trp-calmodulin of the green alga Mougeotia scalaris.</title>
        <authorList>
            <person name="Zoerb C."/>
            <person name="Brunner K.D."/>
            <person name="Wagner G."/>
        </authorList>
    </citation>
    <scope>NUCLEOTIDE SEQUENCE [MRNA]</scope>
    <source>
        <strain>B164.80</strain>
    </source>
</reference>
<accession>O82018</accession>
<keyword id="KW-0007">Acetylation</keyword>
<keyword id="KW-0106">Calcium</keyword>
<keyword id="KW-0479">Metal-binding</keyword>
<keyword id="KW-0488">Methylation</keyword>
<keyword id="KW-0677">Repeat</keyword>
<feature type="initiator methionine" description="Removed" evidence="1">
    <location>
        <position position="1"/>
    </location>
</feature>
<feature type="chain" id="PRO_0000198297" description="Calmodulin">
    <location>
        <begin position="2"/>
        <end position="149"/>
    </location>
</feature>
<feature type="domain" description="EF-hand 1" evidence="2">
    <location>
        <begin position="8"/>
        <end position="43"/>
    </location>
</feature>
<feature type="domain" description="EF-hand 2" evidence="2">
    <location>
        <begin position="44"/>
        <end position="79"/>
    </location>
</feature>
<feature type="domain" description="EF-hand 3" evidence="2">
    <location>
        <begin position="81"/>
        <end position="116"/>
    </location>
</feature>
<feature type="domain" description="EF-hand 4" evidence="2">
    <location>
        <begin position="117"/>
        <end position="149"/>
    </location>
</feature>
<feature type="binding site" evidence="2">
    <location>
        <position position="21"/>
    </location>
    <ligand>
        <name>Ca(2+)</name>
        <dbReference type="ChEBI" id="CHEBI:29108"/>
        <label>1</label>
    </ligand>
</feature>
<feature type="binding site" evidence="2">
    <location>
        <position position="23"/>
    </location>
    <ligand>
        <name>Ca(2+)</name>
        <dbReference type="ChEBI" id="CHEBI:29108"/>
        <label>1</label>
    </ligand>
</feature>
<feature type="binding site" evidence="2">
    <location>
        <position position="25"/>
    </location>
    <ligand>
        <name>Ca(2+)</name>
        <dbReference type="ChEBI" id="CHEBI:29108"/>
        <label>1</label>
    </ligand>
</feature>
<feature type="binding site" evidence="2">
    <location>
        <position position="27"/>
    </location>
    <ligand>
        <name>Ca(2+)</name>
        <dbReference type="ChEBI" id="CHEBI:29108"/>
        <label>1</label>
    </ligand>
</feature>
<feature type="binding site" evidence="2">
    <location>
        <position position="32"/>
    </location>
    <ligand>
        <name>Ca(2+)</name>
        <dbReference type="ChEBI" id="CHEBI:29108"/>
        <label>1</label>
    </ligand>
</feature>
<feature type="binding site" evidence="2">
    <location>
        <position position="57"/>
    </location>
    <ligand>
        <name>Ca(2+)</name>
        <dbReference type="ChEBI" id="CHEBI:29108"/>
        <label>2</label>
    </ligand>
</feature>
<feature type="binding site" evidence="2">
    <location>
        <position position="59"/>
    </location>
    <ligand>
        <name>Ca(2+)</name>
        <dbReference type="ChEBI" id="CHEBI:29108"/>
        <label>2</label>
    </ligand>
</feature>
<feature type="binding site" evidence="2">
    <location>
        <position position="61"/>
    </location>
    <ligand>
        <name>Ca(2+)</name>
        <dbReference type="ChEBI" id="CHEBI:29108"/>
        <label>2</label>
    </ligand>
</feature>
<feature type="binding site" evidence="2">
    <location>
        <position position="63"/>
    </location>
    <ligand>
        <name>Ca(2+)</name>
        <dbReference type="ChEBI" id="CHEBI:29108"/>
        <label>2</label>
    </ligand>
</feature>
<feature type="binding site" evidence="2">
    <location>
        <position position="68"/>
    </location>
    <ligand>
        <name>Ca(2+)</name>
        <dbReference type="ChEBI" id="CHEBI:29108"/>
        <label>2</label>
    </ligand>
</feature>
<feature type="binding site" evidence="2">
    <location>
        <position position="94"/>
    </location>
    <ligand>
        <name>Ca(2+)</name>
        <dbReference type="ChEBI" id="CHEBI:29108"/>
        <label>3</label>
    </ligand>
</feature>
<feature type="binding site" evidence="2">
    <location>
        <position position="96"/>
    </location>
    <ligand>
        <name>Ca(2+)</name>
        <dbReference type="ChEBI" id="CHEBI:29108"/>
        <label>3</label>
    </ligand>
</feature>
<feature type="binding site" evidence="2">
    <location>
        <position position="98"/>
    </location>
    <ligand>
        <name>Ca(2+)</name>
        <dbReference type="ChEBI" id="CHEBI:29108"/>
        <label>3</label>
    </ligand>
</feature>
<feature type="binding site" evidence="2">
    <location>
        <position position="100"/>
    </location>
    <ligand>
        <name>Ca(2+)</name>
        <dbReference type="ChEBI" id="CHEBI:29108"/>
        <label>3</label>
    </ligand>
</feature>
<feature type="binding site" evidence="2">
    <location>
        <position position="105"/>
    </location>
    <ligand>
        <name>Ca(2+)</name>
        <dbReference type="ChEBI" id="CHEBI:29108"/>
        <label>3</label>
    </ligand>
</feature>
<feature type="binding site" evidence="2">
    <location>
        <position position="130"/>
    </location>
    <ligand>
        <name>Ca(2+)</name>
        <dbReference type="ChEBI" id="CHEBI:29108"/>
        <label>4</label>
    </ligand>
</feature>
<feature type="binding site" evidence="2">
    <location>
        <position position="132"/>
    </location>
    <ligand>
        <name>Ca(2+)</name>
        <dbReference type="ChEBI" id="CHEBI:29108"/>
        <label>4</label>
    </ligand>
</feature>
<feature type="binding site" evidence="2">
    <location>
        <position position="134"/>
    </location>
    <ligand>
        <name>Ca(2+)</name>
        <dbReference type="ChEBI" id="CHEBI:29108"/>
        <label>4</label>
    </ligand>
</feature>
<feature type="binding site" evidence="2">
    <location>
        <position position="136"/>
    </location>
    <ligand>
        <name>Ca(2+)</name>
        <dbReference type="ChEBI" id="CHEBI:29108"/>
        <label>4</label>
    </ligand>
</feature>
<feature type="binding site" evidence="2">
    <location>
        <position position="141"/>
    </location>
    <ligand>
        <name>Ca(2+)</name>
        <dbReference type="ChEBI" id="CHEBI:29108"/>
        <label>4</label>
    </ligand>
</feature>
<feature type="modified residue" description="N-acetylalanine" evidence="1">
    <location>
        <position position="2"/>
    </location>
</feature>
<feature type="modified residue" description="N6,N6,N6-trimethyllysine" evidence="1">
    <location>
        <position position="116"/>
    </location>
</feature>